<keyword id="KW-0963">Cytoplasm</keyword>
<keyword id="KW-0255">Endonuclease</keyword>
<keyword id="KW-0378">Hydrolase</keyword>
<keyword id="KW-0479">Metal-binding</keyword>
<keyword id="KW-0540">Nuclease</keyword>
<keyword id="KW-0690">Ribosome biogenesis</keyword>
<keyword id="KW-0698">rRNA processing</keyword>
<keyword id="KW-0862">Zinc</keyword>
<dbReference type="EC" id="3.1.-.-" evidence="1"/>
<dbReference type="EMBL" id="CP000395">
    <property type="protein sequence ID" value="ABH01323.1"/>
    <property type="molecule type" value="Genomic_DNA"/>
</dbReference>
<dbReference type="EMBL" id="CP002933">
    <property type="protein sequence ID" value="AEL69292.1"/>
    <property type="molecule type" value="Genomic_DNA"/>
</dbReference>
<dbReference type="RefSeq" id="WP_011600806.1">
    <property type="nucleotide sequence ID" value="NZ_CP160066.1"/>
</dbReference>
<dbReference type="SMR" id="Q0SPA5"/>
<dbReference type="STRING" id="29518.BLA32_03985"/>
<dbReference type="GeneID" id="77264903"/>
<dbReference type="KEGG" id="baf:BAPKO_0060"/>
<dbReference type="KEGG" id="bafz:BafPKo_0059"/>
<dbReference type="PATRIC" id="fig|390236.22.peg.58"/>
<dbReference type="eggNOG" id="COG0319">
    <property type="taxonomic scope" value="Bacteria"/>
</dbReference>
<dbReference type="HOGENOM" id="CLU_106710_3_3_12"/>
<dbReference type="OrthoDB" id="9807740at2"/>
<dbReference type="Proteomes" id="UP000005216">
    <property type="component" value="Chromosome"/>
</dbReference>
<dbReference type="GO" id="GO:0005737">
    <property type="term" value="C:cytoplasm"/>
    <property type="evidence" value="ECO:0007669"/>
    <property type="project" value="UniProtKB-SubCell"/>
</dbReference>
<dbReference type="GO" id="GO:0004222">
    <property type="term" value="F:metalloendopeptidase activity"/>
    <property type="evidence" value="ECO:0007669"/>
    <property type="project" value="InterPro"/>
</dbReference>
<dbReference type="GO" id="GO:0004521">
    <property type="term" value="F:RNA endonuclease activity"/>
    <property type="evidence" value="ECO:0007669"/>
    <property type="project" value="UniProtKB-UniRule"/>
</dbReference>
<dbReference type="GO" id="GO:0008270">
    <property type="term" value="F:zinc ion binding"/>
    <property type="evidence" value="ECO:0007669"/>
    <property type="project" value="UniProtKB-UniRule"/>
</dbReference>
<dbReference type="GO" id="GO:0006364">
    <property type="term" value="P:rRNA processing"/>
    <property type="evidence" value="ECO:0007669"/>
    <property type="project" value="UniProtKB-UniRule"/>
</dbReference>
<dbReference type="Gene3D" id="3.40.390.30">
    <property type="entry name" value="Metalloproteases ('zincins'), catalytic domain"/>
    <property type="match status" value="1"/>
</dbReference>
<dbReference type="HAMAP" id="MF_00009">
    <property type="entry name" value="Endoribonucl_YbeY"/>
    <property type="match status" value="1"/>
</dbReference>
<dbReference type="InterPro" id="IPR023091">
    <property type="entry name" value="MetalPrtase_cat_dom_sf_prd"/>
</dbReference>
<dbReference type="InterPro" id="IPR002036">
    <property type="entry name" value="YbeY"/>
</dbReference>
<dbReference type="InterPro" id="IPR020549">
    <property type="entry name" value="YbeY_CS"/>
</dbReference>
<dbReference type="NCBIfam" id="TIGR00043">
    <property type="entry name" value="rRNA maturation RNase YbeY"/>
    <property type="match status" value="1"/>
</dbReference>
<dbReference type="PANTHER" id="PTHR46986">
    <property type="entry name" value="ENDORIBONUCLEASE YBEY, CHLOROPLASTIC"/>
    <property type="match status" value="1"/>
</dbReference>
<dbReference type="PANTHER" id="PTHR46986:SF1">
    <property type="entry name" value="ENDORIBONUCLEASE YBEY, CHLOROPLASTIC"/>
    <property type="match status" value="1"/>
</dbReference>
<dbReference type="Pfam" id="PF02130">
    <property type="entry name" value="YbeY"/>
    <property type="match status" value="1"/>
</dbReference>
<dbReference type="SUPFAM" id="SSF55486">
    <property type="entry name" value="Metalloproteases ('zincins'), catalytic domain"/>
    <property type="match status" value="1"/>
</dbReference>
<dbReference type="PROSITE" id="PS01306">
    <property type="entry name" value="UPF0054"/>
    <property type="match status" value="1"/>
</dbReference>
<protein>
    <recommendedName>
        <fullName evidence="1">Endoribonuclease YbeY</fullName>
        <ecNumber evidence="1">3.1.-.-</ecNumber>
    </recommendedName>
</protein>
<reference key="1">
    <citation type="journal article" date="2006" name="BMC Genomics">
        <title>Comparative genome analysis: selection pressure on the Borrelia vls cassettes is essential for infectivity.</title>
        <authorList>
            <person name="Gloeckner G."/>
            <person name="Schulte-Spechtel U."/>
            <person name="Schilhabel M."/>
            <person name="Felder M."/>
            <person name="Suehnel J."/>
            <person name="Wilske B."/>
            <person name="Platzer M."/>
        </authorList>
    </citation>
    <scope>NUCLEOTIDE SEQUENCE [LARGE SCALE GENOMIC DNA]</scope>
    <source>
        <strain>PKo</strain>
    </source>
</reference>
<reference key="2">
    <citation type="journal article" date="2011" name="J. Bacteriol.">
        <title>Whole-genome sequences of two Borrelia afzelii and two Borrelia garinii Lyme disease agent isolates.</title>
        <authorList>
            <person name="Casjens S.R."/>
            <person name="Mongodin E.F."/>
            <person name="Qiu W.G."/>
            <person name="Dunn J.J."/>
            <person name="Luft B.J."/>
            <person name="Fraser-Liggett C.M."/>
            <person name="Schutzer S.E."/>
        </authorList>
    </citation>
    <scope>NUCLEOTIDE SEQUENCE [LARGE SCALE GENOMIC DNA]</scope>
    <source>
        <strain>PKo</strain>
    </source>
</reference>
<evidence type="ECO:0000255" key="1">
    <source>
        <dbReference type="HAMAP-Rule" id="MF_00009"/>
    </source>
</evidence>
<accession>Q0SPA5</accession>
<accession>G0IQQ6</accession>
<name>YBEY_BORAP</name>
<feature type="chain" id="PRO_0000284168" description="Endoribonuclease YbeY">
    <location>
        <begin position="1"/>
        <end position="152"/>
    </location>
</feature>
<feature type="binding site" evidence="1">
    <location>
        <position position="117"/>
    </location>
    <ligand>
        <name>Zn(2+)</name>
        <dbReference type="ChEBI" id="CHEBI:29105"/>
        <note>catalytic</note>
    </ligand>
</feature>
<feature type="binding site" evidence="1">
    <location>
        <position position="121"/>
    </location>
    <ligand>
        <name>Zn(2+)</name>
        <dbReference type="ChEBI" id="CHEBI:29105"/>
        <note>catalytic</note>
    </ligand>
</feature>
<feature type="binding site" evidence="1">
    <location>
        <position position="127"/>
    </location>
    <ligand>
        <name>Zn(2+)</name>
        <dbReference type="ChEBI" id="CHEBI:29105"/>
        <note>catalytic</note>
    </ligand>
</feature>
<organism>
    <name type="scientific">Borreliella afzelii (strain PKo)</name>
    <name type="common">Borrelia afzelii</name>
    <dbReference type="NCBI Taxonomy" id="390236"/>
    <lineage>
        <taxon>Bacteria</taxon>
        <taxon>Pseudomonadati</taxon>
        <taxon>Spirochaetota</taxon>
        <taxon>Spirochaetia</taxon>
        <taxon>Spirochaetales</taxon>
        <taxon>Borreliaceae</taxon>
        <taxon>Borreliella</taxon>
    </lineage>
</organism>
<sequence length="152" mass="17978">MSKSDLNLLVENIKFEHLSIFYDFILSVLNTLSISDFELSVILCDNVYIQKLNNKFRNKNEPTDVLSFNYNEVNEDLVDGINYKIQGDLIISFEYLKFSAQEFNVEIYEELQRVTIHGILHLMGYKHETNDFQKEGMLILQENILRKNKRVF</sequence>
<comment type="function">
    <text evidence="1">Single strand-specific metallo-endoribonuclease involved in late-stage 70S ribosome quality control and in maturation of the 3' terminus of the 16S rRNA.</text>
</comment>
<comment type="cofactor">
    <cofactor evidence="1">
        <name>Zn(2+)</name>
        <dbReference type="ChEBI" id="CHEBI:29105"/>
    </cofactor>
    <text evidence="1">Binds 1 zinc ion.</text>
</comment>
<comment type="subcellular location">
    <subcellularLocation>
        <location evidence="1">Cytoplasm</location>
    </subcellularLocation>
</comment>
<comment type="similarity">
    <text evidence="1">Belongs to the endoribonuclease YbeY family.</text>
</comment>
<proteinExistence type="inferred from homology"/>
<gene>
    <name evidence="1" type="primary">ybeY</name>
    <name type="ordered locus">BAPKO_0060</name>
    <name type="ordered locus">BafPKo_0059</name>
</gene>